<proteinExistence type="inferred from homology"/>
<reference key="1">
    <citation type="submission" date="2008-08" db="EMBL/GenBank/DDBJ databases">
        <title>Complete sequence of Acidithiobacillus ferrooxidans ATCC 53993.</title>
        <authorList>
            <person name="Lucas S."/>
            <person name="Copeland A."/>
            <person name="Lapidus A."/>
            <person name="Glavina del Rio T."/>
            <person name="Dalin E."/>
            <person name="Tice H."/>
            <person name="Bruce D."/>
            <person name="Goodwin L."/>
            <person name="Pitluck S."/>
            <person name="Sims D."/>
            <person name="Brettin T."/>
            <person name="Detter J.C."/>
            <person name="Han C."/>
            <person name="Kuske C.R."/>
            <person name="Larimer F."/>
            <person name="Land M."/>
            <person name="Hauser L."/>
            <person name="Kyrpides N."/>
            <person name="Lykidis A."/>
            <person name="Borole A.P."/>
        </authorList>
    </citation>
    <scope>NUCLEOTIDE SEQUENCE [LARGE SCALE GENOMIC DNA]</scope>
    <source>
        <strain>ATCC 53993 / BNL-5-31</strain>
    </source>
</reference>
<comment type="function">
    <text evidence="1">Together with the chaperonin GroEL, plays an essential role in assisting protein folding. The GroEL-GroES system forms a nano-cage that allows encapsulation of the non-native substrate proteins and provides a physical environment optimized to promote and accelerate protein folding. GroES binds to the apical surface of the GroEL ring, thereby capping the opening of the GroEL channel.</text>
</comment>
<comment type="subunit">
    <text evidence="1">Heptamer of 7 subunits arranged in a ring. Interacts with the chaperonin GroEL.</text>
</comment>
<comment type="subcellular location">
    <subcellularLocation>
        <location evidence="1">Cytoplasm</location>
    </subcellularLocation>
</comment>
<comment type="similarity">
    <text evidence="1">Belongs to the GroES chaperonin family.</text>
</comment>
<organism>
    <name type="scientific">Acidithiobacillus ferrooxidans (strain ATCC 53993 / BNL-5-31)</name>
    <name type="common">Leptospirillum ferrooxidans (ATCC 53993)</name>
    <dbReference type="NCBI Taxonomy" id="380394"/>
    <lineage>
        <taxon>Bacteria</taxon>
        <taxon>Pseudomonadati</taxon>
        <taxon>Pseudomonadota</taxon>
        <taxon>Acidithiobacillia</taxon>
        <taxon>Acidithiobacillales</taxon>
        <taxon>Acidithiobacillaceae</taxon>
        <taxon>Acidithiobacillus</taxon>
    </lineage>
</organism>
<gene>
    <name evidence="1" type="primary">groES</name>
    <name evidence="1" type="synonym">groS</name>
    <name type="ordered locus">Lferr_0699</name>
</gene>
<protein>
    <recommendedName>
        <fullName evidence="1">Co-chaperonin GroES</fullName>
    </recommendedName>
    <alternativeName>
        <fullName evidence="1">10 kDa chaperonin</fullName>
    </alternativeName>
    <alternativeName>
        <fullName evidence="1">Chaperonin-10</fullName>
        <shortName evidence="1">Cpn10</shortName>
    </alternativeName>
</protein>
<keyword id="KW-0143">Chaperone</keyword>
<keyword id="KW-0963">Cytoplasm</keyword>
<accession>B5EN20</accession>
<sequence>MKLRPLHDRVVIRRLEEEQKTAGGIIIPDTAKEKPVRGEIVAAGHGKILEDGKVRALDVKTGDQVLFAKYAGTEIKVEGEELLVMREDDIMAVIEK</sequence>
<feature type="chain" id="PRO_1000129616" description="Co-chaperonin GroES">
    <location>
        <begin position="1"/>
        <end position="96"/>
    </location>
</feature>
<evidence type="ECO:0000255" key="1">
    <source>
        <dbReference type="HAMAP-Rule" id="MF_00580"/>
    </source>
</evidence>
<dbReference type="EMBL" id="CP001132">
    <property type="protein sequence ID" value="ACH82950.1"/>
    <property type="molecule type" value="Genomic_DNA"/>
</dbReference>
<dbReference type="RefSeq" id="WP_009567579.1">
    <property type="nucleotide sequence ID" value="NC_011206.1"/>
</dbReference>
<dbReference type="SMR" id="B5EN20"/>
<dbReference type="GeneID" id="65279902"/>
<dbReference type="KEGG" id="afe:Lferr_0699"/>
<dbReference type="eggNOG" id="COG0234">
    <property type="taxonomic scope" value="Bacteria"/>
</dbReference>
<dbReference type="HOGENOM" id="CLU_132825_2_0_6"/>
<dbReference type="GO" id="GO:0005737">
    <property type="term" value="C:cytoplasm"/>
    <property type="evidence" value="ECO:0007669"/>
    <property type="project" value="UniProtKB-SubCell"/>
</dbReference>
<dbReference type="GO" id="GO:0005524">
    <property type="term" value="F:ATP binding"/>
    <property type="evidence" value="ECO:0007669"/>
    <property type="project" value="InterPro"/>
</dbReference>
<dbReference type="GO" id="GO:0046872">
    <property type="term" value="F:metal ion binding"/>
    <property type="evidence" value="ECO:0007669"/>
    <property type="project" value="TreeGrafter"/>
</dbReference>
<dbReference type="GO" id="GO:0044183">
    <property type="term" value="F:protein folding chaperone"/>
    <property type="evidence" value="ECO:0007669"/>
    <property type="project" value="InterPro"/>
</dbReference>
<dbReference type="GO" id="GO:0051087">
    <property type="term" value="F:protein-folding chaperone binding"/>
    <property type="evidence" value="ECO:0007669"/>
    <property type="project" value="TreeGrafter"/>
</dbReference>
<dbReference type="GO" id="GO:0051082">
    <property type="term" value="F:unfolded protein binding"/>
    <property type="evidence" value="ECO:0007669"/>
    <property type="project" value="TreeGrafter"/>
</dbReference>
<dbReference type="GO" id="GO:0051085">
    <property type="term" value="P:chaperone cofactor-dependent protein refolding"/>
    <property type="evidence" value="ECO:0007669"/>
    <property type="project" value="TreeGrafter"/>
</dbReference>
<dbReference type="CDD" id="cd00320">
    <property type="entry name" value="cpn10"/>
    <property type="match status" value="1"/>
</dbReference>
<dbReference type="FunFam" id="2.30.33.40:FF:000001">
    <property type="entry name" value="10 kDa chaperonin"/>
    <property type="match status" value="1"/>
</dbReference>
<dbReference type="Gene3D" id="2.30.33.40">
    <property type="entry name" value="GroES chaperonin"/>
    <property type="match status" value="1"/>
</dbReference>
<dbReference type="HAMAP" id="MF_00580">
    <property type="entry name" value="CH10"/>
    <property type="match status" value="1"/>
</dbReference>
<dbReference type="InterPro" id="IPR020818">
    <property type="entry name" value="Chaperonin_GroES"/>
</dbReference>
<dbReference type="InterPro" id="IPR037124">
    <property type="entry name" value="Chaperonin_GroES_sf"/>
</dbReference>
<dbReference type="InterPro" id="IPR018369">
    <property type="entry name" value="Chaprnonin_Cpn10_CS"/>
</dbReference>
<dbReference type="InterPro" id="IPR011032">
    <property type="entry name" value="GroES-like_sf"/>
</dbReference>
<dbReference type="NCBIfam" id="NF001527">
    <property type="entry name" value="PRK00364.1-2"/>
    <property type="match status" value="1"/>
</dbReference>
<dbReference type="NCBIfam" id="NF001529">
    <property type="entry name" value="PRK00364.1-5"/>
    <property type="match status" value="1"/>
</dbReference>
<dbReference type="NCBIfam" id="NF001531">
    <property type="entry name" value="PRK00364.2-2"/>
    <property type="match status" value="1"/>
</dbReference>
<dbReference type="NCBIfam" id="NF001533">
    <property type="entry name" value="PRK00364.2-4"/>
    <property type="match status" value="1"/>
</dbReference>
<dbReference type="NCBIfam" id="NF001534">
    <property type="entry name" value="PRK00364.2-5"/>
    <property type="match status" value="1"/>
</dbReference>
<dbReference type="PANTHER" id="PTHR10772">
    <property type="entry name" value="10 KDA HEAT SHOCK PROTEIN"/>
    <property type="match status" value="1"/>
</dbReference>
<dbReference type="PANTHER" id="PTHR10772:SF58">
    <property type="entry name" value="CO-CHAPERONIN GROES"/>
    <property type="match status" value="1"/>
</dbReference>
<dbReference type="Pfam" id="PF00166">
    <property type="entry name" value="Cpn10"/>
    <property type="match status" value="1"/>
</dbReference>
<dbReference type="PRINTS" id="PR00297">
    <property type="entry name" value="CHAPERONIN10"/>
</dbReference>
<dbReference type="SMART" id="SM00883">
    <property type="entry name" value="Cpn10"/>
    <property type="match status" value="1"/>
</dbReference>
<dbReference type="SUPFAM" id="SSF50129">
    <property type="entry name" value="GroES-like"/>
    <property type="match status" value="1"/>
</dbReference>
<dbReference type="PROSITE" id="PS00681">
    <property type="entry name" value="CHAPERONINS_CPN10"/>
    <property type="match status" value="1"/>
</dbReference>
<name>CH10_ACIF5</name>